<proteinExistence type="inferred from homology"/>
<feature type="chain" id="PRO_0000361831" description="Cytoskeleton protein RodZ">
    <location>
        <begin position="1"/>
        <end position="336"/>
    </location>
</feature>
<feature type="topological domain" description="Cytoplasmic" evidence="1">
    <location>
        <begin position="1"/>
        <end position="111"/>
    </location>
</feature>
<feature type="transmembrane region" description="Helical; Signal-anchor for type II membrane protein" evidence="1">
    <location>
        <begin position="112"/>
        <end position="132"/>
    </location>
</feature>
<feature type="topological domain" description="Periplasmic" evidence="1">
    <location>
        <begin position="133"/>
        <end position="336"/>
    </location>
</feature>
<feature type="domain" description="HTH cro/C1-type" evidence="1">
    <location>
        <begin position="19"/>
        <end position="71"/>
    </location>
</feature>
<feature type="DNA-binding region" description="H-T-H motif" evidence="1">
    <location>
        <begin position="30"/>
        <end position="49"/>
    </location>
</feature>
<feature type="region of interest" description="Disordered" evidence="2">
    <location>
        <begin position="152"/>
        <end position="235"/>
    </location>
</feature>
<feature type="compositionally biased region" description="Low complexity" evidence="2">
    <location>
        <begin position="152"/>
        <end position="164"/>
    </location>
</feature>
<feature type="compositionally biased region" description="Polar residues" evidence="2">
    <location>
        <begin position="165"/>
        <end position="190"/>
    </location>
</feature>
<feature type="compositionally biased region" description="Polar residues" evidence="2">
    <location>
        <begin position="200"/>
        <end position="217"/>
    </location>
</feature>
<feature type="compositionally biased region" description="Low complexity" evidence="2">
    <location>
        <begin position="220"/>
        <end position="235"/>
    </location>
</feature>
<dbReference type="EMBL" id="CP000653">
    <property type="protein sequence ID" value="ABP61674.1"/>
    <property type="molecule type" value="Genomic_DNA"/>
</dbReference>
<dbReference type="RefSeq" id="WP_015960006.1">
    <property type="nucleotide sequence ID" value="NC_009436.1"/>
</dbReference>
<dbReference type="SMR" id="A4WD94"/>
<dbReference type="STRING" id="399742.Ent638_3010"/>
<dbReference type="KEGG" id="ent:Ent638_3010"/>
<dbReference type="eggNOG" id="COG1426">
    <property type="taxonomic scope" value="Bacteria"/>
</dbReference>
<dbReference type="HOGENOM" id="CLU_047530_3_1_6"/>
<dbReference type="OrthoDB" id="9790252at2"/>
<dbReference type="Proteomes" id="UP000000230">
    <property type="component" value="Chromosome"/>
</dbReference>
<dbReference type="GO" id="GO:0005886">
    <property type="term" value="C:plasma membrane"/>
    <property type="evidence" value="ECO:0007669"/>
    <property type="project" value="UniProtKB-SubCell"/>
</dbReference>
<dbReference type="GO" id="GO:0003677">
    <property type="term" value="F:DNA binding"/>
    <property type="evidence" value="ECO:0007669"/>
    <property type="project" value="UniProtKB-KW"/>
</dbReference>
<dbReference type="GO" id="GO:0008360">
    <property type="term" value="P:regulation of cell shape"/>
    <property type="evidence" value="ECO:0007669"/>
    <property type="project" value="UniProtKB-UniRule"/>
</dbReference>
<dbReference type="CDD" id="cd00093">
    <property type="entry name" value="HTH_XRE"/>
    <property type="match status" value="1"/>
</dbReference>
<dbReference type="Gene3D" id="1.10.260.40">
    <property type="entry name" value="lambda repressor-like DNA-binding domains"/>
    <property type="match status" value="1"/>
</dbReference>
<dbReference type="HAMAP" id="MF_02017">
    <property type="entry name" value="RodZ"/>
    <property type="match status" value="1"/>
</dbReference>
<dbReference type="InterPro" id="IPR050400">
    <property type="entry name" value="Bact_Cytoskel_RodZ"/>
</dbReference>
<dbReference type="InterPro" id="IPR001387">
    <property type="entry name" value="Cro/C1-type_HTH"/>
</dbReference>
<dbReference type="InterPro" id="IPR010982">
    <property type="entry name" value="Lambda_DNA-bd_dom_sf"/>
</dbReference>
<dbReference type="InterPro" id="IPR023690">
    <property type="entry name" value="RodZ"/>
</dbReference>
<dbReference type="InterPro" id="IPR025194">
    <property type="entry name" value="RodZ-like_C"/>
</dbReference>
<dbReference type="NCBIfam" id="NF008109">
    <property type="entry name" value="PRK10856.1"/>
    <property type="match status" value="1"/>
</dbReference>
<dbReference type="PANTHER" id="PTHR34475">
    <property type="match status" value="1"/>
</dbReference>
<dbReference type="PANTHER" id="PTHR34475:SF1">
    <property type="entry name" value="CYTOSKELETON PROTEIN RODZ"/>
    <property type="match status" value="1"/>
</dbReference>
<dbReference type="Pfam" id="PF13413">
    <property type="entry name" value="HTH_25"/>
    <property type="match status" value="1"/>
</dbReference>
<dbReference type="Pfam" id="PF13464">
    <property type="entry name" value="RodZ_C"/>
    <property type="match status" value="1"/>
</dbReference>
<dbReference type="SMART" id="SM00530">
    <property type="entry name" value="HTH_XRE"/>
    <property type="match status" value="1"/>
</dbReference>
<dbReference type="SUPFAM" id="SSF47413">
    <property type="entry name" value="lambda repressor-like DNA-binding domains"/>
    <property type="match status" value="1"/>
</dbReference>
<dbReference type="PROSITE" id="PS50943">
    <property type="entry name" value="HTH_CROC1"/>
    <property type="match status" value="1"/>
</dbReference>
<reference key="1">
    <citation type="journal article" date="2010" name="PLoS Genet.">
        <title>Genome sequence of the plant growth promoting endophytic bacterium Enterobacter sp. 638.</title>
        <authorList>
            <person name="Taghavi S."/>
            <person name="van der Lelie D."/>
            <person name="Hoffman A."/>
            <person name="Zhang Y.B."/>
            <person name="Walla M.D."/>
            <person name="Vangronsveld J."/>
            <person name="Newman L."/>
            <person name="Monchy S."/>
        </authorList>
    </citation>
    <scope>NUCLEOTIDE SEQUENCE [LARGE SCALE GENOMIC DNA]</scope>
    <source>
        <strain>638</strain>
    </source>
</reference>
<gene>
    <name evidence="1" type="primary">rodZ</name>
    <name type="ordered locus">Ent638_3010</name>
</gene>
<protein>
    <recommendedName>
        <fullName evidence="1">Cytoskeleton protein RodZ</fullName>
    </recommendedName>
</protein>
<accession>A4WD94</accession>
<organism>
    <name type="scientific">Enterobacter sp. (strain 638)</name>
    <dbReference type="NCBI Taxonomy" id="399742"/>
    <lineage>
        <taxon>Bacteria</taxon>
        <taxon>Pseudomonadati</taxon>
        <taxon>Pseudomonadota</taxon>
        <taxon>Gammaproteobacteria</taxon>
        <taxon>Enterobacterales</taxon>
        <taxon>Enterobacteriaceae</taxon>
        <taxon>Enterobacter</taxon>
    </lineage>
</organism>
<keyword id="KW-0997">Cell inner membrane</keyword>
<keyword id="KW-1003">Cell membrane</keyword>
<keyword id="KW-0133">Cell shape</keyword>
<keyword id="KW-0238">DNA-binding</keyword>
<keyword id="KW-0472">Membrane</keyword>
<keyword id="KW-0735">Signal-anchor</keyword>
<keyword id="KW-0812">Transmembrane</keyword>
<keyword id="KW-1133">Transmembrane helix</keyword>
<evidence type="ECO:0000255" key="1">
    <source>
        <dbReference type="HAMAP-Rule" id="MF_02017"/>
    </source>
</evidence>
<evidence type="ECO:0000256" key="2">
    <source>
        <dbReference type="SAM" id="MobiDB-lite"/>
    </source>
</evidence>
<comment type="function">
    <text evidence="1">Cytoskeletal protein that is involved in cell-shape control through regulation of the length of the long axis.</text>
</comment>
<comment type="subcellular location">
    <subcellularLocation>
        <location evidence="1">Cell inner membrane</location>
        <topology evidence="1">Single-pass type II membrane protein</topology>
    </subcellularLocation>
    <text evidence="1">Forms helical filaments along the long axis of the cell.</text>
</comment>
<comment type="domain">
    <text evidence="1">The helix-turn-helix (HTH) motif in the cytoplasmic domain of the N-terminus is involved in the formation of spirals to maintain the rigid rod shape. As this protein is anchored in the cytoplasmic membrane, the HTH motif may contribute to protein-protein interactions to form the RodZ helix, which is localized beneath the cytoplasmic membrane. The C-terminal domain may be critical for determination of the rod shape by probably interacting with enzymes required for synthesis of the peptidoglycan layer, including PBPs in the periplasm.</text>
</comment>
<comment type="similarity">
    <text evidence="1">Belongs to the RodZ family.</text>
</comment>
<sequence length="336" mass="36189">MNTEATHDKTEALSTGVRLRNAREQLGLSQQAVAERLCLKVSTVRDIEEDKAPADLASTFLRGYIRSYAKLVHIPEEELLPMMEKHAPVRAAKVAPMQTFSLGKRRKKRDGWLMSFTWLVLFVVIGLTGAWWWQNHKAQQEEITTMADQSSAALNNSGNNGAQSVPLNTDSASTSSEPQTAETDSQTVEPVQTPAPAMTPDQTAAQNAVVSPSQANVDSAPAVTPTTTGNVNVTQPLPTDQAGVAATTADANALVMNFSADCWLEVTDATGKKLFSGLQRKDGTLNLTGQAPYKLKIGAPSAVQIQYQGKPVDLSRFIRTNQVARLTVSAEQSAAQ</sequence>
<name>RODZ_ENT38</name>